<dbReference type="EC" id="3.5.1.47" evidence="1"/>
<dbReference type="EMBL" id="CP000410">
    <property type="protein sequence ID" value="ABJ53880.1"/>
    <property type="molecule type" value="Genomic_DNA"/>
</dbReference>
<dbReference type="RefSeq" id="WP_000885102.1">
    <property type="nucleotide sequence ID" value="NZ_JAMLJR010000012.1"/>
</dbReference>
<dbReference type="SMR" id="Q04I78"/>
<dbReference type="PaxDb" id="373153-SPD_1922"/>
<dbReference type="KEGG" id="spd:SPD_1922"/>
<dbReference type="eggNOG" id="COG1473">
    <property type="taxonomic scope" value="Bacteria"/>
</dbReference>
<dbReference type="HOGENOM" id="CLU_023257_0_1_9"/>
<dbReference type="BioCyc" id="SPNE373153:G1G6V-2066-MONOMER"/>
<dbReference type="UniPathway" id="UPA00034">
    <property type="reaction ID" value="UER00024"/>
</dbReference>
<dbReference type="Proteomes" id="UP000001452">
    <property type="component" value="Chromosome"/>
</dbReference>
<dbReference type="GO" id="GO:0050118">
    <property type="term" value="F:N-acetyldiaminopimelate deacetylase activity"/>
    <property type="evidence" value="ECO:0007669"/>
    <property type="project" value="UniProtKB-UniRule"/>
</dbReference>
<dbReference type="GO" id="GO:0019877">
    <property type="term" value="P:diaminopimelate biosynthetic process"/>
    <property type="evidence" value="ECO:0007669"/>
    <property type="project" value="UniProtKB-UniRule"/>
</dbReference>
<dbReference type="GO" id="GO:0009089">
    <property type="term" value="P:lysine biosynthetic process via diaminopimelate"/>
    <property type="evidence" value="ECO:0007669"/>
    <property type="project" value="UniProtKB-UniRule"/>
</dbReference>
<dbReference type="CDD" id="cd05670">
    <property type="entry name" value="M20_Acy1_YkuR-like"/>
    <property type="match status" value="1"/>
</dbReference>
<dbReference type="FunFam" id="3.30.70.360:FF:000001">
    <property type="entry name" value="N-acetyldiaminopimelate deacetylase"/>
    <property type="match status" value="1"/>
</dbReference>
<dbReference type="Gene3D" id="3.30.70.360">
    <property type="match status" value="1"/>
</dbReference>
<dbReference type="Gene3D" id="3.40.630.10">
    <property type="entry name" value="Zn peptidases"/>
    <property type="match status" value="1"/>
</dbReference>
<dbReference type="HAMAP" id="MF_01692">
    <property type="entry name" value="DapEL"/>
    <property type="match status" value="1"/>
</dbReference>
<dbReference type="InterPro" id="IPR023905">
    <property type="entry name" value="AcetylDAP_deacetylase"/>
</dbReference>
<dbReference type="InterPro" id="IPR017439">
    <property type="entry name" value="Amidohydrolase"/>
</dbReference>
<dbReference type="InterPro" id="IPR036264">
    <property type="entry name" value="Bact_exopeptidase_dim_dom"/>
</dbReference>
<dbReference type="InterPro" id="IPR002933">
    <property type="entry name" value="Peptidase_M20"/>
</dbReference>
<dbReference type="InterPro" id="IPR011650">
    <property type="entry name" value="Peptidase_M20_dimer"/>
</dbReference>
<dbReference type="NCBIfam" id="TIGR01891">
    <property type="entry name" value="amidohydrolases"/>
    <property type="match status" value="1"/>
</dbReference>
<dbReference type="PANTHER" id="PTHR11014:SF98">
    <property type="entry name" value="N-ACETYLDIAMINOPIMELATE DEACETYLASE"/>
    <property type="match status" value="1"/>
</dbReference>
<dbReference type="PANTHER" id="PTHR11014">
    <property type="entry name" value="PEPTIDASE M20 FAMILY MEMBER"/>
    <property type="match status" value="1"/>
</dbReference>
<dbReference type="Pfam" id="PF07687">
    <property type="entry name" value="M20_dimer"/>
    <property type="match status" value="1"/>
</dbReference>
<dbReference type="Pfam" id="PF01546">
    <property type="entry name" value="Peptidase_M20"/>
    <property type="match status" value="1"/>
</dbReference>
<dbReference type="PIRSF" id="PIRSF005962">
    <property type="entry name" value="Pept_M20D_amidohydro"/>
    <property type="match status" value="1"/>
</dbReference>
<dbReference type="SUPFAM" id="SSF55031">
    <property type="entry name" value="Bacterial exopeptidase dimerisation domain"/>
    <property type="match status" value="1"/>
</dbReference>
<dbReference type="SUPFAM" id="SSF53187">
    <property type="entry name" value="Zn-dependent exopeptidases"/>
    <property type="match status" value="1"/>
</dbReference>
<sequence length="376" mass="41680">MLDLIQTRRDLHQIPEIGLEEFKTQAYLLDVIEKLTTGKDFVQIRTWRTGILVYLQGSQPERTIGWRTDIDGLPIVEQTGLPFASQHQGRMHACGHDFHMTIALGCLERALEEQPKNNLLFLFQPAEENEAGGMLMYEDDAFGDWLPDQFYGLHVRPDLKVGQIATNTHTLFAGTCEVKIRFKGKGGHAAFPHEANDALVAASYFVTQVQSVVSRNVNPIEGAVVTFGVFQAGTTNNVITDTAFLHGTIRALTQDMSLLVQKRVKTVAEGVAAAFDMEVEVELKQGGYLPVENNPALARELMDFFDEKDGIELIDIEPAMTGEDFGYLLSKVDGVMFWLGIDSPYALHHPQMSPKEEVLAIGVAAVSSFLKKKAAE</sequence>
<protein>
    <recommendedName>
        <fullName evidence="1">N-acetyldiaminopimelate deacetylase</fullName>
        <ecNumber evidence="1">3.5.1.47</ecNumber>
    </recommendedName>
</protein>
<reference key="1">
    <citation type="journal article" date="2007" name="J. Bacteriol.">
        <title>Genome sequence of Avery's virulent serotype 2 strain D39 of Streptococcus pneumoniae and comparison with that of unencapsulated laboratory strain R6.</title>
        <authorList>
            <person name="Lanie J.A."/>
            <person name="Ng W.-L."/>
            <person name="Kazmierczak K.M."/>
            <person name="Andrzejewski T.M."/>
            <person name="Davidsen T.M."/>
            <person name="Wayne K.J."/>
            <person name="Tettelin H."/>
            <person name="Glass J.I."/>
            <person name="Winkler M.E."/>
        </authorList>
    </citation>
    <scope>NUCLEOTIDE SEQUENCE [LARGE SCALE GENOMIC DNA]</scope>
    <source>
        <strain>D39 / NCTC 7466</strain>
    </source>
</reference>
<evidence type="ECO:0000255" key="1">
    <source>
        <dbReference type="HAMAP-Rule" id="MF_01692"/>
    </source>
</evidence>
<feature type="chain" id="PRO_0000376788" description="N-acetyldiaminopimelate deacetylase">
    <location>
        <begin position="1"/>
        <end position="376"/>
    </location>
</feature>
<feature type="active site" evidence="1">
    <location>
        <position position="69"/>
    </location>
</feature>
<feature type="active site" description="Proton acceptor" evidence="1">
    <location>
        <position position="128"/>
    </location>
</feature>
<proteinExistence type="inferred from homology"/>
<comment type="function">
    <text evidence="1">Catalyzes the conversion of N-acetyl-diaminopimelate to diaminopimelate and acetate.</text>
</comment>
<comment type="catalytic activity">
    <reaction evidence="1">
        <text>N-acetyl-(2S,6S)-2,6-diaminopimelate + H2O = (2S,6S)-2,6-diaminopimelate + acetate</text>
        <dbReference type="Rhea" id="RHEA:20405"/>
        <dbReference type="ChEBI" id="CHEBI:15377"/>
        <dbReference type="ChEBI" id="CHEBI:30089"/>
        <dbReference type="ChEBI" id="CHEBI:57609"/>
        <dbReference type="ChEBI" id="CHEBI:58767"/>
        <dbReference type="EC" id="3.5.1.47"/>
    </reaction>
</comment>
<comment type="pathway">
    <text evidence="1">Amino-acid biosynthesis; L-lysine biosynthesis via DAP pathway; LL-2,6-diaminopimelate from (S)-tetrahydrodipicolinate (acetylase route): step 3/3.</text>
</comment>
<comment type="similarity">
    <text evidence="1">Belongs to the peptidase M20A family. N-acetyldiaminopimelate deacetylase subfamily.</text>
</comment>
<name>DAPEL_STRP2</name>
<accession>Q04I78</accession>
<organism>
    <name type="scientific">Streptococcus pneumoniae serotype 2 (strain D39 / NCTC 7466)</name>
    <dbReference type="NCBI Taxonomy" id="373153"/>
    <lineage>
        <taxon>Bacteria</taxon>
        <taxon>Bacillati</taxon>
        <taxon>Bacillota</taxon>
        <taxon>Bacilli</taxon>
        <taxon>Lactobacillales</taxon>
        <taxon>Streptococcaceae</taxon>
        <taxon>Streptococcus</taxon>
    </lineage>
</organism>
<gene>
    <name type="ordered locus">SPD_1922</name>
</gene>
<keyword id="KW-0028">Amino-acid biosynthesis</keyword>
<keyword id="KW-0220">Diaminopimelate biosynthesis</keyword>
<keyword id="KW-0378">Hydrolase</keyword>
<keyword id="KW-0457">Lysine biosynthesis</keyword>
<keyword id="KW-1185">Reference proteome</keyword>